<comment type="function">
    <text evidence="3">Cytochrome P450 monooxygenase; part of the gene cluster that mediates the biosynthesis of flavunoidine, an alkaloidal terpenoid with a tetracyclic cage-like core connected to dimethylcadaverine via a C-N bond and acylated with 5,5-dimethyl-L-pipecolate (PubMed:31885262). The tetracyclic core is synthesized by the terpene cyclase flvE and the cytochrome P450 monooxygenase flvD (PubMed:31885262). The terpene cyclase flvE catalyzes the cyclization of farnesyl pyrophosphate (FPP) to form (1R,4R,5S)-(+)-acoradiene and the cytochrome P450 monooxygenase flvD is then responsible for oxidative conversion of (1R,4R,5S)-(+)-acoradiene into the tetracyclic cage present in the final product flavunoidine (PubMed:31885262). In parallel, the N-methyltransferase flvH dimethylates L-lysine to give N,N-dimethyl-L-Lysin which is decarboxylated by flvG to afford dimethylcadaverine (PubMed:31885262). The terpene cyclase-like protein flvF is the enzyme that attaches the dimethylcadaverine precusor at the C-7 of the tetracyclic cage to yield pre-flavunoidine (PubMed:31885262). The cytochrome monooxygenase flvC hydroxylates the C-10 position of pre-flavunoidine whereas the NRPS flvI acylates the terpenoid core at the hydroxylated C-10 with dimethylpipecolate to yield final flavunoidine (PubMed:31885262). The bifunctional enzyme flvA and the dehydrogenase flvB are responsible for the synthesis of the dimethylpipecolate precursor (PubMed:31885262). The PLP-dependent lyase domain of flvA might use L-O-acetyl-homoserine and alpha-keto-isovalerate to form an intermediary ketone that can cyclize intramolecularly to yield an imine (PubMed:31885262). The imine can be reduced by flvB to yield the 6-carboxylated pipecolate (PubMed:31885262). The C-terminal alpha-KG-dependent oxygenase domain of flvA is then proposed to catalyze the decarboxylation to yield dimethylpipecolate (PubMed:31885262).</text>
</comment>
<comment type="catalytic activity">
    <reaction evidence="3">
        <text>pre-flavunoidine + reduced [NADPH--hemoprotein reductase] + O2 = 10-hydroxy-pre-flavunoidine + oxidized [NADPH--hemoprotein reductase] + H2O + H(+)</text>
        <dbReference type="Rhea" id="RHEA:77083"/>
        <dbReference type="Rhea" id="RHEA-COMP:11964"/>
        <dbReference type="Rhea" id="RHEA-COMP:11965"/>
        <dbReference type="ChEBI" id="CHEBI:15377"/>
        <dbReference type="ChEBI" id="CHEBI:15378"/>
        <dbReference type="ChEBI" id="CHEBI:15379"/>
        <dbReference type="ChEBI" id="CHEBI:57618"/>
        <dbReference type="ChEBI" id="CHEBI:58210"/>
        <dbReference type="ChEBI" id="CHEBI:194090"/>
        <dbReference type="ChEBI" id="CHEBI:195495"/>
    </reaction>
    <physiologicalReaction direction="left-to-right" evidence="3">
        <dbReference type="Rhea" id="RHEA:77084"/>
    </physiologicalReaction>
</comment>
<comment type="cofactor">
    <cofactor evidence="1">
        <name>heme</name>
        <dbReference type="ChEBI" id="CHEBI:30413"/>
    </cofactor>
</comment>
<comment type="pathway">
    <text evidence="3">Secondary metabolite biosynthesis; terpenoid biosynthesis.</text>
</comment>
<comment type="subcellular location">
    <subcellularLocation>
        <location evidence="2">Membrane</location>
        <topology evidence="2">Single-pass membrane protein</topology>
    </subcellularLocation>
</comment>
<comment type="similarity">
    <text evidence="5">Belongs to the cytochrome P450 family.</text>
</comment>
<dbReference type="EC" id="1.-.-.-" evidence="3"/>
<dbReference type="EMBL" id="EQ963478">
    <property type="protein sequence ID" value="EED50780.1"/>
    <property type="molecule type" value="Genomic_DNA"/>
</dbReference>
<dbReference type="RefSeq" id="XP_002379556.1">
    <property type="nucleotide sequence ID" value="XM_002379515.1"/>
</dbReference>
<dbReference type="SMR" id="B8NHD8"/>
<dbReference type="STRING" id="332952.B8NHD8"/>
<dbReference type="EnsemblFungi" id="EED50780">
    <property type="protein sequence ID" value="EED50780"/>
    <property type="gene ID" value="AFLA_135430"/>
</dbReference>
<dbReference type="VEuPathDB" id="FungiDB:AFLA_005897"/>
<dbReference type="eggNOG" id="KOG0157">
    <property type="taxonomic scope" value="Eukaryota"/>
</dbReference>
<dbReference type="HOGENOM" id="CLU_001570_14_4_1"/>
<dbReference type="OMA" id="WCELYIA"/>
<dbReference type="UniPathway" id="UPA00213"/>
<dbReference type="GO" id="GO:0016020">
    <property type="term" value="C:membrane"/>
    <property type="evidence" value="ECO:0007669"/>
    <property type="project" value="UniProtKB-SubCell"/>
</dbReference>
<dbReference type="GO" id="GO:0020037">
    <property type="term" value="F:heme binding"/>
    <property type="evidence" value="ECO:0007669"/>
    <property type="project" value="InterPro"/>
</dbReference>
<dbReference type="GO" id="GO:0005506">
    <property type="term" value="F:iron ion binding"/>
    <property type="evidence" value="ECO:0007669"/>
    <property type="project" value="InterPro"/>
</dbReference>
<dbReference type="GO" id="GO:0004497">
    <property type="term" value="F:monooxygenase activity"/>
    <property type="evidence" value="ECO:0007669"/>
    <property type="project" value="UniProtKB-KW"/>
</dbReference>
<dbReference type="GO" id="GO:0016705">
    <property type="term" value="F:oxidoreductase activity, acting on paired donors, with incorporation or reduction of molecular oxygen"/>
    <property type="evidence" value="ECO:0007669"/>
    <property type="project" value="InterPro"/>
</dbReference>
<dbReference type="GO" id="GO:0016114">
    <property type="term" value="P:terpenoid biosynthetic process"/>
    <property type="evidence" value="ECO:0007669"/>
    <property type="project" value="UniProtKB-UniPathway"/>
</dbReference>
<dbReference type="CDD" id="cd11062">
    <property type="entry name" value="CYP58-like"/>
    <property type="match status" value="1"/>
</dbReference>
<dbReference type="Gene3D" id="1.10.630.10">
    <property type="entry name" value="Cytochrome P450"/>
    <property type="match status" value="1"/>
</dbReference>
<dbReference type="InterPro" id="IPR001128">
    <property type="entry name" value="Cyt_P450"/>
</dbReference>
<dbReference type="InterPro" id="IPR017972">
    <property type="entry name" value="Cyt_P450_CS"/>
</dbReference>
<dbReference type="InterPro" id="IPR002401">
    <property type="entry name" value="Cyt_P450_E_grp-I"/>
</dbReference>
<dbReference type="InterPro" id="IPR036396">
    <property type="entry name" value="Cyt_P450_sf"/>
</dbReference>
<dbReference type="InterPro" id="IPR050121">
    <property type="entry name" value="Cytochrome_P450_monoxygenase"/>
</dbReference>
<dbReference type="PANTHER" id="PTHR24305">
    <property type="entry name" value="CYTOCHROME P450"/>
    <property type="match status" value="1"/>
</dbReference>
<dbReference type="PANTHER" id="PTHR24305:SF157">
    <property type="entry name" value="N-ACETYLTRYPTOPHAN 6-HYDROXYLASE IVOC-RELATED"/>
    <property type="match status" value="1"/>
</dbReference>
<dbReference type="Pfam" id="PF00067">
    <property type="entry name" value="p450"/>
    <property type="match status" value="1"/>
</dbReference>
<dbReference type="PRINTS" id="PR00463">
    <property type="entry name" value="EP450I"/>
</dbReference>
<dbReference type="PRINTS" id="PR00385">
    <property type="entry name" value="P450"/>
</dbReference>
<dbReference type="SUPFAM" id="SSF48264">
    <property type="entry name" value="Cytochrome P450"/>
    <property type="match status" value="1"/>
</dbReference>
<dbReference type="PROSITE" id="PS00086">
    <property type="entry name" value="CYTOCHROME_P450"/>
    <property type="match status" value="1"/>
</dbReference>
<accession>B8NHD8</accession>
<keyword id="KW-0349">Heme</keyword>
<keyword id="KW-0408">Iron</keyword>
<keyword id="KW-0472">Membrane</keyword>
<keyword id="KW-0479">Metal-binding</keyword>
<keyword id="KW-0503">Monooxygenase</keyword>
<keyword id="KW-0560">Oxidoreductase</keyword>
<keyword id="KW-0812">Transmembrane</keyword>
<keyword id="KW-1133">Transmembrane helix</keyword>
<reference key="1">
    <citation type="journal article" date="2015" name="Genome Announc.">
        <title>Genome sequence of Aspergillus flavus NRRL 3357, a strain that causes aflatoxin contamination of food and feed.</title>
        <authorList>
            <person name="Nierman W.C."/>
            <person name="Yu J."/>
            <person name="Fedorova-Abrams N.D."/>
            <person name="Losada L."/>
            <person name="Cleveland T.E."/>
            <person name="Bhatnagar D."/>
            <person name="Bennett J.W."/>
            <person name="Dean R."/>
            <person name="Payne G.A."/>
        </authorList>
    </citation>
    <scope>NUCLEOTIDE SEQUENCE [LARGE SCALE GENOMIC DNA]</scope>
    <source>
        <strain>ATCC 200026 / FGSC A1120 / IAM 13836 / NRRL 3357 / JCM 12722 / SRRC 167</strain>
    </source>
</reference>
<reference key="2">
    <citation type="journal article" date="2020" name="J. Am. Chem. Soc.">
        <title>Genome mining of alkaloidal terpenoids from a hybrid terpene and nonribosomal peptide biosynthetic pathway.</title>
        <authorList>
            <person name="Yee D.A."/>
            <person name="Kakule T.B."/>
            <person name="Cheng W."/>
            <person name="Chen M."/>
            <person name="Chong C.T.Y."/>
            <person name="Hai Y."/>
            <person name="Hang L.F."/>
            <person name="Hung Y.S."/>
            <person name="Liu N."/>
            <person name="Ohashi M."/>
            <person name="Okorafor I.C."/>
            <person name="Song Y."/>
            <person name="Tang M."/>
            <person name="Zhang Z."/>
            <person name="Tang Y."/>
        </authorList>
    </citation>
    <scope>FUNCTION</scope>
    <scope>CATALYTIC ACTIVITY</scope>
    <scope>PATHWAY</scope>
</reference>
<name>FLVC_ASPFN</name>
<sequence>MDFGGILLHLEARSMATVLIAGLLVYWVGSAIFLAVLHPLAKFPGPKLAAASDWWLVYHEWFLGKSLTDILFDLHQNYGTINVPYGGLQDLWLDMDRIAYVVQSLTWESALEANSLVKLHFSSMQAYSDIYNVKSKWDKDPEVYKAIVDTSSAFGLRNYHEAKERRDLIWPFYSRQSVQRMQKAINRQISFLVDQLDKQNQEGKLSNMSMAFRCLAQDIMADICLGKSFGTLEERDFGSPLIHALDEGLESYVLMKSFPTLRNILYSISAMVTLPGEAEFATYGTIVADHVTRGIQQPDTIPPNTMLGFLVPTSSNTAKEAPQPKLSQGHMTEELQTFVIGAGETVASAMVQGLSGILQSPDLYKNVYEEIVQVWPETDGPVPPIEVLEKLPLLTAVIKEALRLTHGVVTPLARVISAGGACIDGHHVPGGTSVGTSHVFIHMSSDYYDAPDEFRPERWLGSSSDKHLVAFSKGPRGCMGINLAWCQLYLVLATLVRTVQMEYPADLNDIKIKWKDCFQPLYYGRPLQVRCTRAEGHS</sequence>
<evidence type="ECO:0000250" key="1">
    <source>
        <dbReference type="UniProtKB" id="P04798"/>
    </source>
</evidence>
<evidence type="ECO:0000255" key="2"/>
<evidence type="ECO:0000269" key="3">
    <source>
    </source>
</evidence>
<evidence type="ECO:0000303" key="4">
    <source>
    </source>
</evidence>
<evidence type="ECO:0000305" key="5"/>
<organism>
    <name type="scientific">Aspergillus flavus (strain ATCC 200026 / FGSC A1120 / IAM 13836 / NRRL 3357 / JCM 12722 / SRRC 167)</name>
    <dbReference type="NCBI Taxonomy" id="332952"/>
    <lineage>
        <taxon>Eukaryota</taxon>
        <taxon>Fungi</taxon>
        <taxon>Dikarya</taxon>
        <taxon>Ascomycota</taxon>
        <taxon>Pezizomycotina</taxon>
        <taxon>Eurotiomycetes</taxon>
        <taxon>Eurotiomycetidae</taxon>
        <taxon>Eurotiales</taxon>
        <taxon>Aspergillaceae</taxon>
        <taxon>Aspergillus</taxon>
        <taxon>Aspergillus subgen. Circumdati</taxon>
    </lineage>
</organism>
<gene>
    <name evidence="4" type="primary">flvC</name>
    <name type="ORF">AFLA_135430</name>
</gene>
<proteinExistence type="evidence at protein level"/>
<feature type="chain" id="PRO_0000454479" description="Cytochrome P450 monooxygenase flvC">
    <location>
        <begin position="1"/>
        <end position="538"/>
    </location>
</feature>
<feature type="transmembrane region" description="Helical" evidence="2">
    <location>
        <begin position="17"/>
        <end position="37"/>
    </location>
</feature>
<feature type="binding site" description="axial binding residue" evidence="1">
    <location>
        <position position="478"/>
    </location>
    <ligand>
        <name>heme</name>
        <dbReference type="ChEBI" id="CHEBI:30413"/>
    </ligand>
    <ligandPart>
        <name>Fe</name>
        <dbReference type="ChEBI" id="CHEBI:18248"/>
    </ligandPart>
</feature>
<protein>
    <recommendedName>
        <fullName evidence="4">Cytochrome P450 monooxygenase flvC</fullName>
        <ecNumber evidence="3">1.-.-.-</ecNumber>
    </recommendedName>
    <alternativeName>
        <fullName evidence="4">Flavunoidine biosynthesis cluster protein C</fullName>
    </alternativeName>
</protein>